<dbReference type="EMBL" id="LT708304">
    <property type="protein sequence ID" value="SIT99969.1"/>
    <property type="molecule type" value="Genomic_DNA"/>
</dbReference>
<dbReference type="RefSeq" id="NP_855020.1">
    <property type="nucleotide sequence ID" value="NC_002945.3"/>
</dbReference>
<dbReference type="RefSeq" id="WP_003406906.1">
    <property type="nucleotide sequence ID" value="NC_002945.4"/>
</dbReference>
<dbReference type="SMR" id="P67648"/>
<dbReference type="GeneID" id="45425309"/>
<dbReference type="KEGG" id="mbo:BQ2027_MB1366"/>
<dbReference type="PATRIC" id="fig|233413.5.peg.1498"/>
<dbReference type="Proteomes" id="UP000001419">
    <property type="component" value="Chromosome"/>
</dbReference>
<dbReference type="GO" id="GO:0030163">
    <property type="term" value="P:protein catabolic process"/>
    <property type="evidence" value="ECO:0007669"/>
    <property type="project" value="InterPro"/>
</dbReference>
<dbReference type="GO" id="GO:0006508">
    <property type="term" value="P:proteolysis"/>
    <property type="evidence" value="ECO:0007669"/>
    <property type="project" value="UniProtKB-UniRule"/>
</dbReference>
<dbReference type="FunFam" id="3.30.1390.10:FF:000004">
    <property type="entry name" value="ATP-dependent Clp protease adapter protein ClpS"/>
    <property type="match status" value="1"/>
</dbReference>
<dbReference type="Gene3D" id="3.30.1390.10">
    <property type="match status" value="1"/>
</dbReference>
<dbReference type="HAMAP" id="MF_00302">
    <property type="entry name" value="ClpS"/>
    <property type="match status" value="1"/>
</dbReference>
<dbReference type="InterPro" id="IPR022935">
    <property type="entry name" value="ClpS"/>
</dbReference>
<dbReference type="InterPro" id="IPR003769">
    <property type="entry name" value="ClpS_core"/>
</dbReference>
<dbReference type="InterPro" id="IPR014719">
    <property type="entry name" value="Ribosomal_bL12_C/ClpS-like"/>
</dbReference>
<dbReference type="NCBIfam" id="NF000668">
    <property type="entry name" value="PRK00033.1-1"/>
    <property type="match status" value="1"/>
</dbReference>
<dbReference type="Pfam" id="PF02617">
    <property type="entry name" value="ClpS"/>
    <property type="match status" value="1"/>
</dbReference>
<dbReference type="SUPFAM" id="SSF54736">
    <property type="entry name" value="ClpS-like"/>
    <property type="match status" value="1"/>
</dbReference>
<gene>
    <name evidence="1" type="primary">clpS</name>
    <name type="ordered locus">BQ2027_MB1366</name>
</gene>
<proteinExistence type="inferred from homology"/>
<accession>P67648</accession>
<accession>A0A1R3XY09</accession>
<accession>Q10642</accession>
<accession>X2BHT0</accession>
<protein>
    <recommendedName>
        <fullName evidence="1">ATP-dependent Clp protease adapter protein ClpS</fullName>
    </recommendedName>
</protein>
<evidence type="ECO:0000255" key="1">
    <source>
        <dbReference type="HAMAP-Rule" id="MF_00302"/>
    </source>
</evidence>
<feature type="chain" id="PRO_0000215723" description="ATP-dependent Clp protease adapter protein ClpS">
    <location>
        <begin position="1"/>
        <end position="101"/>
    </location>
</feature>
<reference key="1">
    <citation type="journal article" date="2003" name="Proc. Natl. Acad. Sci. U.S.A.">
        <title>The complete genome sequence of Mycobacterium bovis.</title>
        <authorList>
            <person name="Garnier T."/>
            <person name="Eiglmeier K."/>
            <person name="Camus J.-C."/>
            <person name="Medina N."/>
            <person name="Mansoor H."/>
            <person name="Pryor M."/>
            <person name="Duthoy S."/>
            <person name="Grondin S."/>
            <person name="Lacroix C."/>
            <person name="Monsempe C."/>
            <person name="Simon S."/>
            <person name="Harris B."/>
            <person name="Atkin R."/>
            <person name="Doggett J."/>
            <person name="Mayes R."/>
            <person name="Keating L."/>
            <person name="Wheeler P.R."/>
            <person name="Parkhill J."/>
            <person name="Barrell B.G."/>
            <person name="Cole S.T."/>
            <person name="Gordon S.V."/>
            <person name="Hewinson R.G."/>
        </authorList>
    </citation>
    <scope>NUCLEOTIDE SEQUENCE [LARGE SCALE GENOMIC DNA]</scope>
    <source>
        <strain>ATCC BAA-935 / AF2122/97</strain>
    </source>
</reference>
<reference key="2">
    <citation type="journal article" date="2017" name="Genome Announc.">
        <title>Updated reference genome sequence and annotation of Mycobacterium bovis AF2122/97.</title>
        <authorList>
            <person name="Malone K.M."/>
            <person name="Farrell D."/>
            <person name="Stuber T.P."/>
            <person name="Schubert O.T."/>
            <person name="Aebersold R."/>
            <person name="Robbe-Austerman S."/>
            <person name="Gordon S.V."/>
        </authorList>
    </citation>
    <scope>NUCLEOTIDE SEQUENCE [LARGE SCALE GENOMIC DNA]</scope>
    <scope>GENOME REANNOTATION</scope>
    <source>
        <strain>ATCC BAA-935 / AF2122/97</strain>
    </source>
</reference>
<comment type="function">
    <text evidence="1">Involved in the modulation of the specificity of the ClpAP-mediated ATP-dependent protein degradation.</text>
</comment>
<comment type="subunit">
    <text evidence="1">Binds to the N-terminal domain of the chaperone ClpA.</text>
</comment>
<comment type="similarity">
    <text evidence="1">Belongs to the ClpS family.</text>
</comment>
<name>CLPS_MYCBO</name>
<keyword id="KW-1185">Reference proteome</keyword>
<organism>
    <name type="scientific">Mycobacterium bovis (strain ATCC BAA-935 / AF2122/97)</name>
    <dbReference type="NCBI Taxonomy" id="233413"/>
    <lineage>
        <taxon>Bacteria</taxon>
        <taxon>Bacillati</taxon>
        <taxon>Actinomycetota</taxon>
        <taxon>Actinomycetes</taxon>
        <taxon>Mycobacteriales</taxon>
        <taxon>Mycobacteriaceae</taxon>
        <taxon>Mycobacterium</taxon>
        <taxon>Mycobacterium tuberculosis complex</taxon>
    </lineage>
</organism>
<sequence>MAVVSAPAKPGTTWQRESAPVDVTDRAWVTIVWDDPVNLMSYVTYVFQKLFGYSEPHATKLMLQVHNEGKAVVSAGSRESMEVDVSKLHAAGLWATMQQDR</sequence>